<accession>Q9C7V5</accession>
<comment type="similarity">
    <text evidence="1">Belongs to the PPR family. PCMP-E subfamily.</text>
</comment>
<comment type="online information" name="Pentatricopeptide repeat proteins">
    <link uri="https://ppr.plantenergy.uwa.edu.au"/>
</comment>
<name>PP104_ARATH</name>
<reference key="1">
    <citation type="journal article" date="2000" name="Nature">
        <title>Sequence and analysis of chromosome 1 of the plant Arabidopsis thaliana.</title>
        <authorList>
            <person name="Theologis A."/>
            <person name="Ecker J.R."/>
            <person name="Palm C.J."/>
            <person name="Federspiel N.A."/>
            <person name="Kaul S."/>
            <person name="White O."/>
            <person name="Alonso J."/>
            <person name="Altafi H."/>
            <person name="Araujo R."/>
            <person name="Bowman C.L."/>
            <person name="Brooks S.Y."/>
            <person name="Buehler E."/>
            <person name="Chan A."/>
            <person name="Chao Q."/>
            <person name="Chen H."/>
            <person name="Cheuk R.F."/>
            <person name="Chin C.W."/>
            <person name="Chung M.K."/>
            <person name="Conn L."/>
            <person name="Conway A.B."/>
            <person name="Conway A.R."/>
            <person name="Creasy T.H."/>
            <person name="Dewar K."/>
            <person name="Dunn P."/>
            <person name="Etgu P."/>
            <person name="Feldblyum T.V."/>
            <person name="Feng J.-D."/>
            <person name="Fong B."/>
            <person name="Fujii C.Y."/>
            <person name="Gill J.E."/>
            <person name="Goldsmith A.D."/>
            <person name="Haas B."/>
            <person name="Hansen N.F."/>
            <person name="Hughes B."/>
            <person name="Huizar L."/>
            <person name="Hunter J.L."/>
            <person name="Jenkins J."/>
            <person name="Johnson-Hopson C."/>
            <person name="Khan S."/>
            <person name="Khaykin E."/>
            <person name="Kim C.J."/>
            <person name="Koo H.L."/>
            <person name="Kremenetskaia I."/>
            <person name="Kurtz D.B."/>
            <person name="Kwan A."/>
            <person name="Lam B."/>
            <person name="Langin-Hooper S."/>
            <person name="Lee A."/>
            <person name="Lee J.M."/>
            <person name="Lenz C.A."/>
            <person name="Li J.H."/>
            <person name="Li Y.-P."/>
            <person name="Lin X."/>
            <person name="Liu S.X."/>
            <person name="Liu Z.A."/>
            <person name="Luros J.S."/>
            <person name="Maiti R."/>
            <person name="Marziali A."/>
            <person name="Militscher J."/>
            <person name="Miranda M."/>
            <person name="Nguyen M."/>
            <person name="Nierman W.C."/>
            <person name="Osborne B.I."/>
            <person name="Pai G."/>
            <person name="Peterson J."/>
            <person name="Pham P.K."/>
            <person name="Rizzo M."/>
            <person name="Rooney T."/>
            <person name="Rowley D."/>
            <person name="Sakano H."/>
            <person name="Salzberg S.L."/>
            <person name="Schwartz J.R."/>
            <person name="Shinn P."/>
            <person name="Southwick A.M."/>
            <person name="Sun H."/>
            <person name="Tallon L.J."/>
            <person name="Tambunga G."/>
            <person name="Toriumi M.J."/>
            <person name="Town C.D."/>
            <person name="Utterback T."/>
            <person name="Van Aken S."/>
            <person name="Vaysberg M."/>
            <person name="Vysotskaia V.S."/>
            <person name="Walker M."/>
            <person name="Wu D."/>
            <person name="Yu G."/>
            <person name="Fraser C.M."/>
            <person name="Venter J.C."/>
            <person name="Davis R.W."/>
        </authorList>
    </citation>
    <scope>NUCLEOTIDE SEQUENCE [LARGE SCALE GENOMIC DNA]</scope>
    <source>
        <strain>cv. Columbia</strain>
    </source>
</reference>
<reference key="2">
    <citation type="journal article" date="2017" name="Plant J.">
        <title>Araport11: a complete reannotation of the Arabidopsis thaliana reference genome.</title>
        <authorList>
            <person name="Cheng C.Y."/>
            <person name="Krishnakumar V."/>
            <person name="Chan A.P."/>
            <person name="Thibaud-Nissen F."/>
            <person name="Schobel S."/>
            <person name="Town C.D."/>
        </authorList>
    </citation>
    <scope>GENOME REANNOTATION</scope>
    <source>
        <strain>cv. Columbia</strain>
    </source>
</reference>
<reference key="3">
    <citation type="journal article" date="2004" name="Plant Cell">
        <title>Genome-wide analysis of Arabidopsis pentatricopeptide repeat proteins reveals their essential role in organelle biogenesis.</title>
        <authorList>
            <person name="Lurin C."/>
            <person name="Andres C."/>
            <person name="Aubourg S."/>
            <person name="Bellaoui M."/>
            <person name="Bitton F."/>
            <person name="Bruyere C."/>
            <person name="Caboche M."/>
            <person name="Debast C."/>
            <person name="Gualberto J."/>
            <person name="Hoffmann B."/>
            <person name="Lecharny A."/>
            <person name="Le Ret M."/>
            <person name="Martin-Magniette M.-L."/>
            <person name="Mireau H."/>
            <person name="Peeters N."/>
            <person name="Renou J.-P."/>
            <person name="Szurek B."/>
            <person name="Taconnat L."/>
            <person name="Small I."/>
        </authorList>
    </citation>
    <scope>GENE FAMILY</scope>
</reference>
<protein>
    <recommendedName>
        <fullName>Putative pentatricopeptide repeat-containing protein At1g64310</fullName>
    </recommendedName>
</protein>
<gene>
    <name type="primary">PCMP-E65</name>
    <name type="ordered locus">At1g64310</name>
    <name type="ORF">F15H21.19</name>
</gene>
<feature type="chain" id="PRO_0000342845" description="Putative pentatricopeptide repeat-containing protein At1g64310">
    <location>
        <begin position="1"/>
        <end position="552"/>
    </location>
</feature>
<feature type="repeat" description="PPR 1">
    <location>
        <begin position="39"/>
        <end position="69"/>
    </location>
</feature>
<feature type="repeat" description="PPR 2">
    <location>
        <begin position="70"/>
        <end position="104"/>
    </location>
</feature>
<feature type="repeat" description="PPR 3">
    <location>
        <begin position="105"/>
        <end position="139"/>
    </location>
</feature>
<feature type="repeat" description="PPR 4">
    <location>
        <begin position="140"/>
        <end position="170"/>
    </location>
</feature>
<feature type="repeat" description="PPR 5">
    <location>
        <begin position="171"/>
        <end position="205"/>
    </location>
</feature>
<feature type="repeat" description="PPR 6">
    <location>
        <begin position="206"/>
        <end position="240"/>
    </location>
</feature>
<feature type="repeat" description="PPR 7">
    <location>
        <begin position="241"/>
        <end position="271"/>
    </location>
</feature>
<feature type="repeat" description="PPR 8">
    <location>
        <begin position="272"/>
        <end position="306"/>
    </location>
</feature>
<feature type="repeat" description="PPR 9">
    <location>
        <begin position="307"/>
        <end position="341"/>
    </location>
</feature>
<feature type="repeat" description="PPR 10">
    <location>
        <begin position="342"/>
        <end position="372"/>
    </location>
</feature>
<feature type="repeat" description="PPR 11">
    <location>
        <begin position="373"/>
        <end position="407"/>
    </location>
</feature>
<feature type="repeat" description="PPR 12">
    <location>
        <begin position="408"/>
        <end position="438"/>
    </location>
</feature>
<feature type="repeat" description="PPR 13">
    <location>
        <begin position="444"/>
        <end position="474"/>
    </location>
</feature>
<feature type="region of interest" description="Type E motif; degenerate">
    <location>
        <begin position="479"/>
        <end position="552"/>
    </location>
</feature>
<organism>
    <name type="scientific">Arabidopsis thaliana</name>
    <name type="common">Mouse-ear cress</name>
    <dbReference type="NCBI Taxonomy" id="3702"/>
    <lineage>
        <taxon>Eukaryota</taxon>
        <taxon>Viridiplantae</taxon>
        <taxon>Streptophyta</taxon>
        <taxon>Embryophyta</taxon>
        <taxon>Tracheophyta</taxon>
        <taxon>Spermatophyta</taxon>
        <taxon>Magnoliopsida</taxon>
        <taxon>eudicotyledons</taxon>
        <taxon>Gunneridae</taxon>
        <taxon>Pentapetalae</taxon>
        <taxon>rosids</taxon>
        <taxon>malvids</taxon>
        <taxon>Brassicales</taxon>
        <taxon>Brassicaceae</taxon>
        <taxon>Camelineae</taxon>
        <taxon>Arabidopsis</taxon>
    </lineage>
</organism>
<proteinExistence type="inferred from homology"/>
<sequence length="552" mass="61400">MASQTQLRLIIYEFTRKIQTRLNTQKLHSFVTKSKLARDPYFATQLARFYALNDDLISARKLFDVFPERSVFLWNSIIRAYAKAHQFTTVLSLFSQILRSDTRPDNFTYACLARGFSESFDTKGLRCIHGIAIVSGLGFDQICGSAIVKAYSKAGLIVEASKLFCSIPDPDLALWNVMILGYGCCGFWDKGINLFNLMQHRGHQPNCYTMVALTSGLIDPSLLLVAWSVHAFCLKINLDSHSYVGCALVNMYSRCMCIASACSVFNSISEPDLVACSSLITGYSRCGNHKEALHLFAELRMSGKKPDCVLVAIVLGSCAELSDSVSGKEVHSYVIRLGLELDIKVCSALIDMYSKCGLLKCAMSLFAGIPEKNIVSFNSLILGLGLHGFASTAFEKFTEILEMGLIPDEITFSALLCTCCHSGLLNKGQEIFERMKSEFGIEPQTEHYVYMVKLMGMAGKLEEAFEFVMSLQKPIDSGILGALLSCCEVHENTHLAEVVAENIHKNGEERRSVYKVMLSNVYARYGRWDEVERLRDGISESYGGKLPGISWF</sequence>
<keyword id="KW-1185">Reference proteome</keyword>
<keyword id="KW-0677">Repeat</keyword>
<evidence type="ECO:0000305" key="1"/>
<dbReference type="EMBL" id="AC066689">
    <property type="protein sequence ID" value="AAG51720.1"/>
    <property type="molecule type" value="Genomic_DNA"/>
</dbReference>
<dbReference type="EMBL" id="CP002684">
    <property type="protein sequence ID" value="AEE34225.1"/>
    <property type="molecule type" value="Genomic_DNA"/>
</dbReference>
<dbReference type="PIR" id="A96667">
    <property type="entry name" value="A96667"/>
</dbReference>
<dbReference type="RefSeq" id="NP_176613.1">
    <property type="nucleotide sequence ID" value="NM_105105.1"/>
</dbReference>
<dbReference type="SMR" id="Q9C7V5"/>
<dbReference type="FunCoup" id="Q9C7V5">
    <property type="interactions" value="4"/>
</dbReference>
<dbReference type="iPTMnet" id="Q9C7V5"/>
<dbReference type="PaxDb" id="3702-AT1G64310.1"/>
<dbReference type="ProteomicsDB" id="249058"/>
<dbReference type="EnsemblPlants" id="AT1G64310.1">
    <property type="protein sequence ID" value="AT1G64310.1"/>
    <property type="gene ID" value="AT1G64310"/>
</dbReference>
<dbReference type="GeneID" id="842737"/>
<dbReference type="Gramene" id="AT1G64310.1">
    <property type="protein sequence ID" value="AT1G64310.1"/>
    <property type="gene ID" value="AT1G64310"/>
</dbReference>
<dbReference type="KEGG" id="ath:AT1G64310"/>
<dbReference type="Araport" id="AT1G64310"/>
<dbReference type="TAIR" id="AT1G64310">
    <property type="gene designation" value="OTP71"/>
</dbReference>
<dbReference type="eggNOG" id="KOG4197">
    <property type="taxonomic scope" value="Eukaryota"/>
</dbReference>
<dbReference type="HOGENOM" id="CLU_002706_37_2_1"/>
<dbReference type="InParanoid" id="Q9C7V5"/>
<dbReference type="OMA" id="GIHGFCL"/>
<dbReference type="PhylomeDB" id="Q9C7V5"/>
<dbReference type="PRO" id="PR:Q9C7V5"/>
<dbReference type="Proteomes" id="UP000006548">
    <property type="component" value="Chromosome 1"/>
</dbReference>
<dbReference type="ExpressionAtlas" id="Q9C7V5">
    <property type="expression patterns" value="baseline and differential"/>
</dbReference>
<dbReference type="GO" id="GO:0005739">
    <property type="term" value="C:mitochondrion"/>
    <property type="evidence" value="ECO:0007669"/>
    <property type="project" value="GOC"/>
</dbReference>
<dbReference type="GO" id="GO:0003723">
    <property type="term" value="F:RNA binding"/>
    <property type="evidence" value="ECO:0007669"/>
    <property type="project" value="InterPro"/>
</dbReference>
<dbReference type="GO" id="GO:1900864">
    <property type="term" value="P:mitochondrial RNA modification"/>
    <property type="evidence" value="ECO:0000315"/>
    <property type="project" value="TAIR"/>
</dbReference>
<dbReference type="FunFam" id="1.25.40.10:FF:000529">
    <property type="entry name" value="Pentatricopeptide repeat-containing protein"/>
    <property type="match status" value="1"/>
</dbReference>
<dbReference type="FunFam" id="1.25.40.10:FF:000343">
    <property type="entry name" value="Pentatricopeptide repeat-containing protein At3g58590"/>
    <property type="match status" value="1"/>
</dbReference>
<dbReference type="FunFam" id="1.25.40.10:FF:001697">
    <property type="entry name" value="Pentatricopeptide repeat-containing protein mitochondrial"/>
    <property type="match status" value="1"/>
</dbReference>
<dbReference type="FunFam" id="1.25.40.10:FF:001811">
    <property type="entry name" value="Putative pentatricopeptide repeat-containing protein At1g64310"/>
    <property type="match status" value="1"/>
</dbReference>
<dbReference type="FunFam" id="1.25.40.10:FF:001184">
    <property type="entry name" value="Putative pentatricopeptide repeat-containing protein At3g18840"/>
    <property type="match status" value="1"/>
</dbReference>
<dbReference type="Gene3D" id="1.25.40.10">
    <property type="entry name" value="Tetratricopeptide repeat domain"/>
    <property type="match status" value="5"/>
</dbReference>
<dbReference type="InterPro" id="IPR046848">
    <property type="entry name" value="E_motif"/>
</dbReference>
<dbReference type="InterPro" id="IPR002885">
    <property type="entry name" value="Pentatricopeptide_rpt"/>
</dbReference>
<dbReference type="InterPro" id="IPR046960">
    <property type="entry name" value="PPR_At4g14850-like_plant"/>
</dbReference>
<dbReference type="InterPro" id="IPR011990">
    <property type="entry name" value="TPR-like_helical_dom_sf"/>
</dbReference>
<dbReference type="NCBIfam" id="TIGR00756">
    <property type="entry name" value="PPR"/>
    <property type="match status" value="4"/>
</dbReference>
<dbReference type="PANTHER" id="PTHR47926">
    <property type="entry name" value="PENTATRICOPEPTIDE REPEAT-CONTAINING PROTEIN"/>
    <property type="match status" value="1"/>
</dbReference>
<dbReference type="PANTHER" id="PTHR47926:SF347">
    <property type="entry name" value="PENTATRICOPEPTIDE REPEAT-CONTAINING PROTEIN"/>
    <property type="match status" value="1"/>
</dbReference>
<dbReference type="Pfam" id="PF20431">
    <property type="entry name" value="E_motif"/>
    <property type="match status" value="1"/>
</dbReference>
<dbReference type="Pfam" id="PF01535">
    <property type="entry name" value="PPR"/>
    <property type="match status" value="5"/>
</dbReference>
<dbReference type="Pfam" id="PF13041">
    <property type="entry name" value="PPR_2"/>
    <property type="match status" value="2"/>
</dbReference>
<dbReference type="PROSITE" id="PS51375">
    <property type="entry name" value="PPR"/>
    <property type="match status" value="10"/>
</dbReference>